<protein>
    <recommendedName>
        <fullName evidence="1">GTPase Obg</fullName>
        <ecNumber evidence="1">3.6.5.-</ecNumber>
    </recommendedName>
    <alternativeName>
        <fullName evidence="1">GTP-binding protein Obg</fullName>
    </alternativeName>
</protein>
<organism>
    <name type="scientific">Prochlorococcus marinus (strain MIT 9301)</name>
    <dbReference type="NCBI Taxonomy" id="167546"/>
    <lineage>
        <taxon>Bacteria</taxon>
        <taxon>Bacillati</taxon>
        <taxon>Cyanobacteriota</taxon>
        <taxon>Cyanophyceae</taxon>
        <taxon>Synechococcales</taxon>
        <taxon>Prochlorococcaceae</taxon>
        <taxon>Prochlorococcus</taxon>
    </lineage>
</organism>
<gene>
    <name evidence="1" type="primary">obg</name>
    <name type="ordered locus">P9301_02391</name>
</gene>
<sequence length="327" mass="35323">MQFIDQANIILKAGKGGNGIVSFRREKFVPAGGPSGGNGGRGGSVILMADNNLQTLLDFKFKREIIAEDGCKGGPNKRSGASGQDTILKVPCGTEIRDIKTGIILGDLTKDKQSLTIAIGGRGGHGNAYYLSNQNRAPESFTEGKDGEIWEVQLELKLLAEVGIIGLPNAGKSTLISVVSSARPKIANYPFTTLIPNLGVVRKMDGNGCLFADIPGLISGAADGVGLGHDFLRHIQRTKILVHLIDAIAENPLHDFEIIEQELKKYGKGLLDKERIIVLNKMELVDDDYLQIITKKLEDLSKKKVLVISSSLKKGLSSLLSEVWKRI</sequence>
<comment type="function">
    <text evidence="1">An essential GTPase which binds GTP, GDP and possibly (p)ppGpp with moderate affinity, with high nucleotide exchange rates and a fairly low GTP hydrolysis rate. Plays a role in control of the cell cycle, stress response, ribosome biogenesis and in those bacteria that undergo differentiation, in morphogenesis control.</text>
</comment>
<comment type="cofactor">
    <cofactor evidence="1">
        <name>Mg(2+)</name>
        <dbReference type="ChEBI" id="CHEBI:18420"/>
    </cofactor>
</comment>
<comment type="subunit">
    <text evidence="1">Monomer.</text>
</comment>
<comment type="subcellular location">
    <subcellularLocation>
        <location evidence="1">Cytoplasm</location>
    </subcellularLocation>
</comment>
<comment type="similarity">
    <text evidence="1">Belongs to the TRAFAC class OBG-HflX-like GTPase superfamily. OBG GTPase family.</text>
</comment>
<reference key="1">
    <citation type="journal article" date="2007" name="PLoS Genet.">
        <title>Patterns and implications of gene gain and loss in the evolution of Prochlorococcus.</title>
        <authorList>
            <person name="Kettler G.C."/>
            <person name="Martiny A.C."/>
            <person name="Huang K."/>
            <person name="Zucker J."/>
            <person name="Coleman M.L."/>
            <person name="Rodrigue S."/>
            <person name="Chen F."/>
            <person name="Lapidus A."/>
            <person name="Ferriera S."/>
            <person name="Johnson J."/>
            <person name="Steglich C."/>
            <person name="Church G.M."/>
            <person name="Richardson P."/>
            <person name="Chisholm S.W."/>
        </authorList>
    </citation>
    <scope>NUCLEOTIDE SEQUENCE [LARGE SCALE GENOMIC DNA]</scope>
    <source>
        <strain>MIT 9301</strain>
    </source>
</reference>
<feature type="chain" id="PRO_0000386135" description="GTPase Obg">
    <location>
        <begin position="1"/>
        <end position="327"/>
    </location>
</feature>
<feature type="domain" description="Obg" evidence="2">
    <location>
        <begin position="1"/>
        <end position="159"/>
    </location>
</feature>
<feature type="domain" description="OBG-type G" evidence="1">
    <location>
        <begin position="160"/>
        <end position="327"/>
    </location>
</feature>
<feature type="binding site" evidence="1">
    <location>
        <begin position="166"/>
        <end position="173"/>
    </location>
    <ligand>
        <name>ATP</name>
        <dbReference type="ChEBI" id="CHEBI:30616"/>
    </ligand>
</feature>
<feature type="binding site" evidence="1">
    <location>
        <position position="173"/>
    </location>
    <ligand>
        <name>Mg(2+)</name>
        <dbReference type="ChEBI" id="CHEBI:18420"/>
    </ligand>
</feature>
<feature type="binding site" evidence="1">
    <location>
        <begin position="191"/>
        <end position="195"/>
    </location>
    <ligand>
        <name>ATP</name>
        <dbReference type="ChEBI" id="CHEBI:30616"/>
    </ligand>
</feature>
<feature type="binding site" evidence="1">
    <location>
        <position position="193"/>
    </location>
    <ligand>
        <name>Mg(2+)</name>
        <dbReference type="ChEBI" id="CHEBI:18420"/>
    </ligand>
</feature>
<feature type="binding site" evidence="1">
    <location>
        <begin position="213"/>
        <end position="216"/>
    </location>
    <ligand>
        <name>ATP</name>
        <dbReference type="ChEBI" id="CHEBI:30616"/>
    </ligand>
</feature>
<feature type="binding site" evidence="1">
    <location>
        <begin position="280"/>
        <end position="283"/>
    </location>
    <ligand>
        <name>ATP</name>
        <dbReference type="ChEBI" id="CHEBI:30616"/>
    </ligand>
</feature>
<feature type="binding site" evidence="1">
    <location>
        <begin position="309"/>
        <end position="311"/>
    </location>
    <ligand>
        <name>ATP</name>
        <dbReference type="ChEBI" id="CHEBI:30616"/>
    </ligand>
</feature>
<dbReference type="EC" id="3.6.5.-" evidence="1"/>
<dbReference type="EMBL" id="CP000576">
    <property type="protein sequence ID" value="ABO16862.1"/>
    <property type="molecule type" value="Genomic_DNA"/>
</dbReference>
<dbReference type="SMR" id="A3PAT7"/>
<dbReference type="STRING" id="167546.P9301_02391"/>
<dbReference type="KEGG" id="pmg:P9301_02391"/>
<dbReference type="eggNOG" id="COG0536">
    <property type="taxonomic scope" value="Bacteria"/>
</dbReference>
<dbReference type="HOGENOM" id="CLU_011747_2_0_3"/>
<dbReference type="OrthoDB" id="9807318at2"/>
<dbReference type="Proteomes" id="UP000001430">
    <property type="component" value="Chromosome"/>
</dbReference>
<dbReference type="GO" id="GO:0005737">
    <property type="term" value="C:cytoplasm"/>
    <property type="evidence" value="ECO:0007669"/>
    <property type="project" value="UniProtKB-SubCell"/>
</dbReference>
<dbReference type="GO" id="GO:0005524">
    <property type="term" value="F:ATP binding"/>
    <property type="evidence" value="ECO:0007669"/>
    <property type="project" value="UniProtKB-KW"/>
</dbReference>
<dbReference type="GO" id="GO:0005525">
    <property type="term" value="F:GTP binding"/>
    <property type="evidence" value="ECO:0007669"/>
    <property type="project" value="UniProtKB-UniRule"/>
</dbReference>
<dbReference type="GO" id="GO:0003924">
    <property type="term" value="F:GTPase activity"/>
    <property type="evidence" value="ECO:0007669"/>
    <property type="project" value="UniProtKB-UniRule"/>
</dbReference>
<dbReference type="GO" id="GO:0000287">
    <property type="term" value="F:magnesium ion binding"/>
    <property type="evidence" value="ECO:0007669"/>
    <property type="project" value="InterPro"/>
</dbReference>
<dbReference type="GO" id="GO:0042254">
    <property type="term" value="P:ribosome biogenesis"/>
    <property type="evidence" value="ECO:0007669"/>
    <property type="project" value="UniProtKB-UniRule"/>
</dbReference>
<dbReference type="CDD" id="cd01898">
    <property type="entry name" value="Obg"/>
    <property type="match status" value="1"/>
</dbReference>
<dbReference type="FunFam" id="2.70.210.12:FF:000001">
    <property type="entry name" value="GTPase Obg"/>
    <property type="match status" value="1"/>
</dbReference>
<dbReference type="Gene3D" id="2.70.210.12">
    <property type="entry name" value="GTP1/OBG domain"/>
    <property type="match status" value="1"/>
</dbReference>
<dbReference type="Gene3D" id="3.40.50.300">
    <property type="entry name" value="P-loop containing nucleotide triphosphate hydrolases"/>
    <property type="match status" value="1"/>
</dbReference>
<dbReference type="HAMAP" id="MF_01454">
    <property type="entry name" value="GTPase_Obg"/>
    <property type="match status" value="1"/>
</dbReference>
<dbReference type="InterPro" id="IPR031167">
    <property type="entry name" value="G_OBG"/>
</dbReference>
<dbReference type="InterPro" id="IPR006073">
    <property type="entry name" value="GTP-bd"/>
</dbReference>
<dbReference type="InterPro" id="IPR014100">
    <property type="entry name" value="GTP-bd_Obg/CgtA"/>
</dbReference>
<dbReference type="InterPro" id="IPR006169">
    <property type="entry name" value="GTP1_OBG_dom"/>
</dbReference>
<dbReference type="InterPro" id="IPR036726">
    <property type="entry name" value="GTP1_OBG_dom_sf"/>
</dbReference>
<dbReference type="InterPro" id="IPR045086">
    <property type="entry name" value="OBG_GTPase"/>
</dbReference>
<dbReference type="InterPro" id="IPR027417">
    <property type="entry name" value="P-loop_NTPase"/>
</dbReference>
<dbReference type="NCBIfam" id="TIGR02729">
    <property type="entry name" value="Obg_CgtA"/>
    <property type="match status" value="1"/>
</dbReference>
<dbReference type="NCBIfam" id="NF008955">
    <property type="entry name" value="PRK12297.1"/>
    <property type="match status" value="1"/>
</dbReference>
<dbReference type="NCBIfam" id="NF008956">
    <property type="entry name" value="PRK12299.1"/>
    <property type="match status" value="1"/>
</dbReference>
<dbReference type="PANTHER" id="PTHR11702">
    <property type="entry name" value="DEVELOPMENTALLY REGULATED GTP-BINDING PROTEIN-RELATED"/>
    <property type="match status" value="1"/>
</dbReference>
<dbReference type="PANTHER" id="PTHR11702:SF31">
    <property type="entry name" value="MITOCHONDRIAL RIBOSOME-ASSOCIATED GTPASE 2"/>
    <property type="match status" value="1"/>
</dbReference>
<dbReference type="Pfam" id="PF01018">
    <property type="entry name" value="GTP1_OBG"/>
    <property type="match status" value="1"/>
</dbReference>
<dbReference type="Pfam" id="PF01926">
    <property type="entry name" value="MMR_HSR1"/>
    <property type="match status" value="1"/>
</dbReference>
<dbReference type="PIRSF" id="PIRSF002401">
    <property type="entry name" value="GTP_bd_Obg/CgtA"/>
    <property type="match status" value="1"/>
</dbReference>
<dbReference type="PRINTS" id="PR00326">
    <property type="entry name" value="GTP1OBG"/>
</dbReference>
<dbReference type="SUPFAM" id="SSF82051">
    <property type="entry name" value="Obg GTP-binding protein N-terminal domain"/>
    <property type="match status" value="1"/>
</dbReference>
<dbReference type="SUPFAM" id="SSF52540">
    <property type="entry name" value="P-loop containing nucleoside triphosphate hydrolases"/>
    <property type="match status" value="1"/>
</dbReference>
<dbReference type="PROSITE" id="PS51710">
    <property type="entry name" value="G_OBG"/>
    <property type="match status" value="1"/>
</dbReference>
<dbReference type="PROSITE" id="PS51883">
    <property type="entry name" value="OBG"/>
    <property type="match status" value="1"/>
</dbReference>
<keyword id="KW-0067">ATP-binding</keyword>
<keyword id="KW-0963">Cytoplasm</keyword>
<keyword id="KW-0342">GTP-binding</keyword>
<keyword id="KW-0378">Hydrolase</keyword>
<keyword id="KW-0460">Magnesium</keyword>
<keyword id="KW-0479">Metal-binding</keyword>
<keyword id="KW-0547">Nucleotide-binding</keyword>
<keyword id="KW-1185">Reference proteome</keyword>
<evidence type="ECO:0000255" key="1">
    <source>
        <dbReference type="HAMAP-Rule" id="MF_01454"/>
    </source>
</evidence>
<evidence type="ECO:0000255" key="2">
    <source>
        <dbReference type="PROSITE-ProRule" id="PRU01231"/>
    </source>
</evidence>
<name>OBG_PROM0</name>
<proteinExistence type="inferred from homology"/>
<accession>A3PAT7</accession>